<keyword id="KW-0240">DNA-directed RNA polymerase</keyword>
<keyword id="KW-0548">Nucleotidyltransferase</keyword>
<keyword id="KW-0804">Transcription</keyword>
<keyword id="KW-0808">Transferase</keyword>
<dbReference type="EC" id="2.7.7.6" evidence="1"/>
<dbReference type="EMBL" id="AE015929">
    <property type="protein sequence ID" value="AAO04483.1"/>
    <property type="molecule type" value="Genomic_DNA"/>
</dbReference>
<dbReference type="RefSeq" id="NP_764441.1">
    <property type="nucleotide sequence ID" value="NC_004461.1"/>
</dbReference>
<dbReference type="RefSeq" id="WP_001830123.1">
    <property type="nucleotide sequence ID" value="NZ_WBME01000001.1"/>
</dbReference>
<dbReference type="SMR" id="Q8CSW3"/>
<dbReference type="KEGG" id="sep:SE_0886"/>
<dbReference type="PATRIC" id="fig|176280.10.peg.859"/>
<dbReference type="eggNOG" id="COG1758">
    <property type="taxonomic scope" value="Bacteria"/>
</dbReference>
<dbReference type="HOGENOM" id="CLU_125406_6_0_9"/>
<dbReference type="OrthoDB" id="9815459at2"/>
<dbReference type="Proteomes" id="UP000001411">
    <property type="component" value="Chromosome"/>
</dbReference>
<dbReference type="GO" id="GO:0000428">
    <property type="term" value="C:DNA-directed RNA polymerase complex"/>
    <property type="evidence" value="ECO:0007669"/>
    <property type="project" value="UniProtKB-KW"/>
</dbReference>
<dbReference type="GO" id="GO:0003677">
    <property type="term" value="F:DNA binding"/>
    <property type="evidence" value="ECO:0007669"/>
    <property type="project" value="UniProtKB-UniRule"/>
</dbReference>
<dbReference type="GO" id="GO:0003899">
    <property type="term" value="F:DNA-directed RNA polymerase activity"/>
    <property type="evidence" value="ECO:0007669"/>
    <property type="project" value="UniProtKB-UniRule"/>
</dbReference>
<dbReference type="GO" id="GO:0006351">
    <property type="term" value="P:DNA-templated transcription"/>
    <property type="evidence" value="ECO:0007669"/>
    <property type="project" value="UniProtKB-UniRule"/>
</dbReference>
<dbReference type="Gene3D" id="3.90.940.10">
    <property type="match status" value="1"/>
</dbReference>
<dbReference type="HAMAP" id="MF_00366">
    <property type="entry name" value="RNApol_bact_RpoZ"/>
    <property type="match status" value="1"/>
</dbReference>
<dbReference type="InterPro" id="IPR003716">
    <property type="entry name" value="DNA-dir_RNA_pol_omega"/>
</dbReference>
<dbReference type="InterPro" id="IPR006110">
    <property type="entry name" value="Pol_omega/Rpo6/RPB6"/>
</dbReference>
<dbReference type="InterPro" id="IPR036161">
    <property type="entry name" value="RPB6/omega-like_sf"/>
</dbReference>
<dbReference type="NCBIfam" id="TIGR00690">
    <property type="entry name" value="rpoZ"/>
    <property type="match status" value="1"/>
</dbReference>
<dbReference type="PANTHER" id="PTHR34476">
    <property type="entry name" value="DNA-DIRECTED RNA POLYMERASE SUBUNIT OMEGA"/>
    <property type="match status" value="1"/>
</dbReference>
<dbReference type="PANTHER" id="PTHR34476:SF1">
    <property type="entry name" value="DNA-DIRECTED RNA POLYMERASE SUBUNIT OMEGA"/>
    <property type="match status" value="1"/>
</dbReference>
<dbReference type="Pfam" id="PF01192">
    <property type="entry name" value="RNA_pol_Rpb6"/>
    <property type="match status" value="1"/>
</dbReference>
<dbReference type="SMART" id="SM01409">
    <property type="entry name" value="RNA_pol_Rpb6"/>
    <property type="match status" value="1"/>
</dbReference>
<dbReference type="SUPFAM" id="SSF63562">
    <property type="entry name" value="RPB6/omega subunit-like"/>
    <property type="match status" value="1"/>
</dbReference>
<comment type="function">
    <text evidence="1">Promotes RNA polymerase assembly. Latches the N- and C-terminal regions of the beta' subunit thereby facilitating its interaction with the beta and alpha subunits.</text>
</comment>
<comment type="catalytic activity">
    <reaction evidence="1">
        <text>RNA(n) + a ribonucleoside 5'-triphosphate = RNA(n+1) + diphosphate</text>
        <dbReference type="Rhea" id="RHEA:21248"/>
        <dbReference type="Rhea" id="RHEA-COMP:14527"/>
        <dbReference type="Rhea" id="RHEA-COMP:17342"/>
        <dbReference type="ChEBI" id="CHEBI:33019"/>
        <dbReference type="ChEBI" id="CHEBI:61557"/>
        <dbReference type="ChEBI" id="CHEBI:140395"/>
        <dbReference type="EC" id="2.7.7.6"/>
    </reaction>
</comment>
<comment type="subunit">
    <text evidence="1">The RNAP catalytic core consists of 2 alpha, 1 beta, 1 beta' and 1 omega subunit. When a sigma factor is associated with the core the holoenzyme is formed, which can initiate transcription.</text>
</comment>
<comment type="similarity">
    <text evidence="1">Belongs to the RNA polymerase subunit omega family.</text>
</comment>
<organism>
    <name type="scientific">Staphylococcus epidermidis (strain ATCC 12228 / FDA PCI 1200)</name>
    <dbReference type="NCBI Taxonomy" id="176280"/>
    <lineage>
        <taxon>Bacteria</taxon>
        <taxon>Bacillati</taxon>
        <taxon>Bacillota</taxon>
        <taxon>Bacilli</taxon>
        <taxon>Bacillales</taxon>
        <taxon>Staphylococcaceae</taxon>
        <taxon>Staphylococcus</taxon>
    </lineage>
</organism>
<feature type="chain" id="PRO_0000128983" description="DNA-directed RNA polymerase subunit omega">
    <location>
        <begin position="1"/>
        <end position="70"/>
    </location>
</feature>
<name>RPOZ_STAES</name>
<accession>Q8CSW3</accession>
<reference key="1">
    <citation type="journal article" date="2003" name="Mol. Microbiol.">
        <title>Genome-based analysis of virulence genes in a non-biofilm-forming Staphylococcus epidermidis strain (ATCC 12228).</title>
        <authorList>
            <person name="Zhang Y.-Q."/>
            <person name="Ren S.-X."/>
            <person name="Li H.-L."/>
            <person name="Wang Y.-X."/>
            <person name="Fu G."/>
            <person name="Yang J."/>
            <person name="Qin Z.-Q."/>
            <person name="Miao Y.-G."/>
            <person name="Wang W.-Y."/>
            <person name="Chen R.-S."/>
            <person name="Shen Y."/>
            <person name="Chen Z."/>
            <person name="Yuan Z.-H."/>
            <person name="Zhao G.-P."/>
            <person name="Qu D."/>
            <person name="Danchin A."/>
            <person name="Wen Y.-M."/>
        </authorList>
    </citation>
    <scope>NUCLEOTIDE SEQUENCE [LARGE SCALE GENOMIC DNA]</scope>
    <source>
        <strain>ATCC 12228 / FDA PCI 1200</strain>
    </source>
</reference>
<gene>
    <name evidence="1" type="primary">rpoZ</name>
    <name type="ordered locus">SE_0886</name>
</gene>
<sequence length="70" mass="7791">MLNPPLNQLTAKVNSKYLIATTAAKRARELDERRETALLDQYHSSKPVGKALEEIADGKIEPVVPKEYLG</sequence>
<evidence type="ECO:0000255" key="1">
    <source>
        <dbReference type="HAMAP-Rule" id="MF_00366"/>
    </source>
</evidence>
<proteinExistence type="inferred from homology"/>
<protein>
    <recommendedName>
        <fullName evidence="1">DNA-directed RNA polymerase subunit omega</fullName>
        <shortName evidence="1">RNAP omega subunit</shortName>
        <ecNumber evidence="1">2.7.7.6</ecNumber>
    </recommendedName>
    <alternativeName>
        <fullName evidence="1">RNA polymerase omega subunit</fullName>
    </alternativeName>
    <alternativeName>
        <fullName evidence="1">Transcriptase subunit omega</fullName>
    </alternativeName>
</protein>